<keyword id="KW-0067">ATP-binding</keyword>
<keyword id="KW-0963">Cytoplasm</keyword>
<keyword id="KW-0436">Ligase</keyword>
<keyword id="KW-0547">Nucleotide-binding</keyword>
<keyword id="KW-0566">Pantothenate biosynthesis</keyword>
<gene>
    <name evidence="1" type="primary">panC</name>
    <name type="ordered locus">CLI_0509</name>
</gene>
<dbReference type="EC" id="6.3.2.1" evidence="1"/>
<dbReference type="EMBL" id="CP000728">
    <property type="protein sequence ID" value="ABS41947.1"/>
    <property type="molecule type" value="Genomic_DNA"/>
</dbReference>
<dbReference type="RefSeq" id="WP_011987439.1">
    <property type="nucleotide sequence ID" value="NC_009699.1"/>
</dbReference>
<dbReference type="SMR" id="A7GAI5"/>
<dbReference type="KEGG" id="cbf:CLI_0509"/>
<dbReference type="HOGENOM" id="CLU_047148_0_0_9"/>
<dbReference type="UniPathway" id="UPA00028">
    <property type="reaction ID" value="UER00005"/>
</dbReference>
<dbReference type="Proteomes" id="UP000002410">
    <property type="component" value="Chromosome"/>
</dbReference>
<dbReference type="GO" id="GO:0005829">
    <property type="term" value="C:cytosol"/>
    <property type="evidence" value="ECO:0007669"/>
    <property type="project" value="TreeGrafter"/>
</dbReference>
<dbReference type="GO" id="GO:0005524">
    <property type="term" value="F:ATP binding"/>
    <property type="evidence" value="ECO:0007669"/>
    <property type="project" value="UniProtKB-KW"/>
</dbReference>
<dbReference type="GO" id="GO:0004592">
    <property type="term" value="F:pantoate-beta-alanine ligase activity"/>
    <property type="evidence" value="ECO:0007669"/>
    <property type="project" value="UniProtKB-UniRule"/>
</dbReference>
<dbReference type="GO" id="GO:0015940">
    <property type="term" value="P:pantothenate biosynthetic process"/>
    <property type="evidence" value="ECO:0007669"/>
    <property type="project" value="UniProtKB-UniRule"/>
</dbReference>
<dbReference type="CDD" id="cd00560">
    <property type="entry name" value="PanC"/>
    <property type="match status" value="1"/>
</dbReference>
<dbReference type="FunFam" id="3.30.1300.10:FF:000001">
    <property type="entry name" value="Pantothenate synthetase"/>
    <property type="match status" value="1"/>
</dbReference>
<dbReference type="FunFam" id="3.40.50.620:FF:000013">
    <property type="entry name" value="Pantothenate synthetase"/>
    <property type="match status" value="1"/>
</dbReference>
<dbReference type="Gene3D" id="3.40.50.620">
    <property type="entry name" value="HUPs"/>
    <property type="match status" value="1"/>
</dbReference>
<dbReference type="Gene3D" id="3.30.1300.10">
    <property type="entry name" value="Pantoate-beta-alanine ligase, C-terminal domain"/>
    <property type="match status" value="1"/>
</dbReference>
<dbReference type="HAMAP" id="MF_00158">
    <property type="entry name" value="PanC"/>
    <property type="match status" value="1"/>
</dbReference>
<dbReference type="InterPro" id="IPR004821">
    <property type="entry name" value="Cyt_trans-like"/>
</dbReference>
<dbReference type="InterPro" id="IPR003721">
    <property type="entry name" value="Pantoate_ligase"/>
</dbReference>
<dbReference type="InterPro" id="IPR042176">
    <property type="entry name" value="Pantoate_ligase_C"/>
</dbReference>
<dbReference type="InterPro" id="IPR014729">
    <property type="entry name" value="Rossmann-like_a/b/a_fold"/>
</dbReference>
<dbReference type="NCBIfam" id="TIGR00125">
    <property type="entry name" value="cyt_tran_rel"/>
    <property type="match status" value="1"/>
</dbReference>
<dbReference type="NCBIfam" id="TIGR00018">
    <property type="entry name" value="panC"/>
    <property type="match status" value="1"/>
</dbReference>
<dbReference type="PANTHER" id="PTHR21299">
    <property type="entry name" value="CYTIDYLATE KINASE/PANTOATE-BETA-ALANINE LIGASE"/>
    <property type="match status" value="1"/>
</dbReference>
<dbReference type="PANTHER" id="PTHR21299:SF1">
    <property type="entry name" value="PANTOATE--BETA-ALANINE LIGASE"/>
    <property type="match status" value="1"/>
</dbReference>
<dbReference type="Pfam" id="PF02569">
    <property type="entry name" value="Pantoate_ligase"/>
    <property type="match status" value="1"/>
</dbReference>
<dbReference type="SUPFAM" id="SSF52374">
    <property type="entry name" value="Nucleotidylyl transferase"/>
    <property type="match status" value="1"/>
</dbReference>
<sequence length="281" mass="31823">MNIVNTIKDVRLIIKKWKDENLSIGYVPTMGYLHEGHASLIKKAREENDKVIVSIFVNPIQFGPKEDYSTYPRDLVKDSSLCEKFGVDLIFNPETSEMYPNKIYSHINVDILTENLCGEKRPGHFQGVCTVLTKFFNILNPTKAYLGEKDAQQLAVVRKMVEDLNFPIEIIGCPIIREEDGLAKSSRNAYLNKQERKSALILNKSLKEAQNALESGEKNSNNIRDIIVSKLNKEPLAKIDYVSIVDSITLQSVKKIQSSILVAIAVYIGKTRLIDNFTFKL</sequence>
<feature type="chain" id="PRO_1000076852" description="Pantothenate synthetase">
    <location>
        <begin position="1"/>
        <end position="281"/>
    </location>
</feature>
<feature type="active site" description="Proton donor" evidence="1">
    <location>
        <position position="37"/>
    </location>
</feature>
<feature type="binding site" evidence="1">
    <location>
        <begin position="30"/>
        <end position="37"/>
    </location>
    <ligand>
        <name>ATP</name>
        <dbReference type="ChEBI" id="CHEBI:30616"/>
    </ligand>
</feature>
<feature type="binding site" evidence="1">
    <location>
        <position position="61"/>
    </location>
    <ligand>
        <name>(R)-pantoate</name>
        <dbReference type="ChEBI" id="CHEBI:15980"/>
    </ligand>
</feature>
<feature type="binding site" evidence="1">
    <location>
        <position position="61"/>
    </location>
    <ligand>
        <name>beta-alanine</name>
        <dbReference type="ChEBI" id="CHEBI:57966"/>
    </ligand>
</feature>
<feature type="binding site" evidence="1">
    <location>
        <begin position="147"/>
        <end position="150"/>
    </location>
    <ligand>
        <name>ATP</name>
        <dbReference type="ChEBI" id="CHEBI:30616"/>
    </ligand>
</feature>
<feature type="binding site" evidence="1">
    <location>
        <position position="153"/>
    </location>
    <ligand>
        <name>(R)-pantoate</name>
        <dbReference type="ChEBI" id="CHEBI:15980"/>
    </ligand>
</feature>
<feature type="binding site" evidence="1">
    <location>
        <position position="176"/>
    </location>
    <ligand>
        <name>ATP</name>
        <dbReference type="ChEBI" id="CHEBI:30616"/>
    </ligand>
</feature>
<feature type="binding site" evidence="1">
    <location>
        <begin position="184"/>
        <end position="187"/>
    </location>
    <ligand>
        <name>ATP</name>
        <dbReference type="ChEBI" id="CHEBI:30616"/>
    </ligand>
</feature>
<proteinExistence type="inferred from homology"/>
<evidence type="ECO:0000255" key="1">
    <source>
        <dbReference type="HAMAP-Rule" id="MF_00158"/>
    </source>
</evidence>
<protein>
    <recommendedName>
        <fullName evidence="1">Pantothenate synthetase</fullName>
        <shortName evidence="1">PS</shortName>
        <ecNumber evidence="1">6.3.2.1</ecNumber>
    </recommendedName>
    <alternativeName>
        <fullName evidence="1">Pantoate--beta-alanine ligase</fullName>
    </alternativeName>
    <alternativeName>
        <fullName evidence="1">Pantoate-activating enzyme</fullName>
    </alternativeName>
</protein>
<organism>
    <name type="scientific">Clostridium botulinum (strain Langeland / NCTC 10281 / Type F)</name>
    <dbReference type="NCBI Taxonomy" id="441772"/>
    <lineage>
        <taxon>Bacteria</taxon>
        <taxon>Bacillati</taxon>
        <taxon>Bacillota</taxon>
        <taxon>Clostridia</taxon>
        <taxon>Eubacteriales</taxon>
        <taxon>Clostridiaceae</taxon>
        <taxon>Clostridium</taxon>
    </lineage>
</organism>
<comment type="function">
    <text evidence="1">Catalyzes the condensation of pantoate with beta-alanine in an ATP-dependent reaction via a pantoyl-adenylate intermediate.</text>
</comment>
<comment type="catalytic activity">
    <reaction evidence="1">
        <text>(R)-pantoate + beta-alanine + ATP = (R)-pantothenate + AMP + diphosphate + H(+)</text>
        <dbReference type="Rhea" id="RHEA:10912"/>
        <dbReference type="ChEBI" id="CHEBI:15378"/>
        <dbReference type="ChEBI" id="CHEBI:15980"/>
        <dbReference type="ChEBI" id="CHEBI:29032"/>
        <dbReference type="ChEBI" id="CHEBI:30616"/>
        <dbReference type="ChEBI" id="CHEBI:33019"/>
        <dbReference type="ChEBI" id="CHEBI:57966"/>
        <dbReference type="ChEBI" id="CHEBI:456215"/>
        <dbReference type="EC" id="6.3.2.1"/>
    </reaction>
</comment>
<comment type="pathway">
    <text evidence="1">Cofactor biosynthesis; (R)-pantothenate biosynthesis; (R)-pantothenate from (R)-pantoate and beta-alanine: step 1/1.</text>
</comment>
<comment type="subunit">
    <text evidence="1">Homodimer.</text>
</comment>
<comment type="subcellular location">
    <subcellularLocation>
        <location evidence="1">Cytoplasm</location>
    </subcellularLocation>
</comment>
<comment type="miscellaneous">
    <text evidence="1">The reaction proceeds by a bi uni uni bi ping pong mechanism.</text>
</comment>
<comment type="similarity">
    <text evidence="1">Belongs to the pantothenate synthetase family.</text>
</comment>
<accession>A7GAI5</accession>
<reference key="1">
    <citation type="submission" date="2007-06" db="EMBL/GenBank/DDBJ databases">
        <authorList>
            <person name="Brinkac L.M."/>
            <person name="Daugherty S."/>
            <person name="Dodson R.J."/>
            <person name="Madupu R."/>
            <person name="Brown J.L."/>
            <person name="Bruce D."/>
            <person name="Detter C."/>
            <person name="Munk C."/>
            <person name="Smith L.A."/>
            <person name="Smith T.J."/>
            <person name="White O."/>
            <person name="Brettin T.S."/>
        </authorList>
    </citation>
    <scope>NUCLEOTIDE SEQUENCE [LARGE SCALE GENOMIC DNA]</scope>
    <source>
        <strain>Langeland / NCTC 10281 / Type F</strain>
    </source>
</reference>
<name>PANC_CLOBL</name>